<dbReference type="EC" id="4.1.1.48" evidence="1"/>
<dbReference type="EMBL" id="CP000151">
    <property type="protein sequence ID" value="ABB07219.1"/>
    <property type="molecule type" value="Genomic_DNA"/>
</dbReference>
<dbReference type="RefSeq" id="WP_011350814.1">
    <property type="nucleotide sequence ID" value="NC_007510.1"/>
</dbReference>
<dbReference type="SMR" id="Q39JZ7"/>
<dbReference type="GeneID" id="45093527"/>
<dbReference type="KEGG" id="bur:Bcep18194_A3618"/>
<dbReference type="PATRIC" id="fig|482957.22.peg.469"/>
<dbReference type="HOGENOM" id="CLU_034247_2_0_4"/>
<dbReference type="UniPathway" id="UPA00035">
    <property type="reaction ID" value="UER00043"/>
</dbReference>
<dbReference type="Proteomes" id="UP000002705">
    <property type="component" value="Chromosome 1"/>
</dbReference>
<dbReference type="GO" id="GO:0004425">
    <property type="term" value="F:indole-3-glycerol-phosphate synthase activity"/>
    <property type="evidence" value="ECO:0007669"/>
    <property type="project" value="UniProtKB-UniRule"/>
</dbReference>
<dbReference type="GO" id="GO:0004640">
    <property type="term" value="F:phosphoribosylanthranilate isomerase activity"/>
    <property type="evidence" value="ECO:0007669"/>
    <property type="project" value="TreeGrafter"/>
</dbReference>
<dbReference type="GO" id="GO:0000162">
    <property type="term" value="P:L-tryptophan biosynthetic process"/>
    <property type="evidence" value="ECO:0007669"/>
    <property type="project" value="UniProtKB-UniRule"/>
</dbReference>
<dbReference type="CDD" id="cd00331">
    <property type="entry name" value="IGPS"/>
    <property type="match status" value="1"/>
</dbReference>
<dbReference type="FunFam" id="3.20.20.70:FF:000024">
    <property type="entry name" value="Indole-3-glycerol phosphate synthase"/>
    <property type="match status" value="1"/>
</dbReference>
<dbReference type="Gene3D" id="3.20.20.70">
    <property type="entry name" value="Aldolase class I"/>
    <property type="match status" value="1"/>
</dbReference>
<dbReference type="HAMAP" id="MF_00134_B">
    <property type="entry name" value="IGPS_B"/>
    <property type="match status" value="1"/>
</dbReference>
<dbReference type="InterPro" id="IPR013785">
    <property type="entry name" value="Aldolase_TIM"/>
</dbReference>
<dbReference type="InterPro" id="IPR045186">
    <property type="entry name" value="Indole-3-glycerol_P_synth"/>
</dbReference>
<dbReference type="InterPro" id="IPR013798">
    <property type="entry name" value="Indole-3-glycerol_P_synth_dom"/>
</dbReference>
<dbReference type="InterPro" id="IPR001468">
    <property type="entry name" value="Indole-3-GlycerolPSynthase_CS"/>
</dbReference>
<dbReference type="InterPro" id="IPR011060">
    <property type="entry name" value="RibuloseP-bd_barrel"/>
</dbReference>
<dbReference type="NCBIfam" id="NF001373">
    <property type="entry name" value="PRK00278.1-6"/>
    <property type="match status" value="1"/>
</dbReference>
<dbReference type="NCBIfam" id="NF001377">
    <property type="entry name" value="PRK00278.2-4"/>
    <property type="match status" value="1"/>
</dbReference>
<dbReference type="PANTHER" id="PTHR22854:SF2">
    <property type="entry name" value="INDOLE-3-GLYCEROL-PHOSPHATE SYNTHASE"/>
    <property type="match status" value="1"/>
</dbReference>
<dbReference type="PANTHER" id="PTHR22854">
    <property type="entry name" value="TRYPTOPHAN BIOSYNTHESIS PROTEIN"/>
    <property type="match status" value="1"/>
</dbReference>
<dbReference type="Pfam" id="PF00218">
    <property type="entry name" value="IGPS"/>
    <property type="match status" value="1"/>
</dbReference>
<dbReference type="SUPFAM" id="SSF51366">
    <property type="entry name" value="Ribulose-phoshate binding barrel"/>
    <property type="match status" value="1"/>
</dbReference>
<dbReference type="PROSITE" id="PS00614">
    <property type="entry name" value="IGPS"/>
    <property type="match status" value="1"/>
</dbReference>
<gene>
    <name evidence="1" type="primary">trpC</name>
    <name type="ordered locus">Bcep18194_A3618</name>
</gene>
<feature type="chain" id="PRO_1000018462" description="Indole-3-glycerol phosphate synthase">
    <location>
        <begin position="1"/>
        <end position="261"/>
    </location>
</feature>
<proteinExistence type="inferred from homology"/>
<sequence>MSDILDRIIAVKREEVAAAMRSAPLEALKLEASARDLRDFVGALRAKHAAGHAAVISEIKKASPSKGVLREHFVPADIARSYAEHGAACLSVLTDEQFFQGSVRYLEEARAACTLPVLRKDFIVDAYQIMEARAMGADAILLIAAALDTPLMQDLEAYAHSLGLAVLVEVHDRNEMEQALTLKTPLLGINNRNLRTFETSIQTTLDMLDMIPSDRIVVTESGILSRTDVDTMRAANVNTFLVGEAFMRADQPGEELARMFF</sequence>
<keyword id="KW-0028">Amino-acid biosynthesis</keyword>
<keyword id="KW-0057">Aromatic amino acid biosynthesis</keyword>
<keyword id="KW-0210">Decarboxylase</keyword>
<keyword id="KW-0456">Lyase</keyword>
<keyword id="KW-0822">Tryptophan biosynthesis</keyword>
<evidence type="ECO:0000255" key="1">
    <source>
        <dbReference type="HAMAP-Rule" id="MF_00134"/>
    </source>
</evidence>
<reference key="1">
    <citation type="submission" date="2005-10" db="EMBL/GenBank/DDBJ databases">
        <title>Complete sequence of chromosome 1 of Burkholderia sp. 383.</title>
        <authorList>
            <consortium name="US DOE Joint Genome Institute"/>
            <person name="Copeland A."/>
            <person name="Lucas S."/>
            <person name="Lapidus A."/>
            <person name="Barry K."/>
            <person name="Detter J.C."/>
            <person name="Glavina T."/>
            <person name="Hammon N."/>
            <person name="Israni S."/>
            <person name="Pitluck S."/>
            <person name="Chain P."/>
            <person name="Malfatti S."/>
            <person name="Shin M."/>
            <person name="Vergez L."/>
            <person name="Schmutz J."/>
            <person name="Larimer F."/>
            <person name="Land M."/>
            <person name="Kyrpides N."/>
            <person name="Lykidis A."/>
            <person name="Richardson P."/>
        </authorList>
    </citation>
    <scope>NUCLEOTIDE SEQUENCE [LARGE SCALE GENOMIC DNA]</scope>
    <source>
        <strain>ATCC 17760 / DSM 23089 / LMG 22485 / NCIMB 9086 / R18194 / 383</strain>
    </source>
</reference>
<protein>
    <recommendedName>
        <fullName evidence="1">Indole-3-glycerol phosphate synthase</fullName>
        <shortName evidence="1">IGPS</shortName>
        <ecNumber evidence="1">4.1.1.48</ecNumber>
    </recommendedName>
</protein>
<comment type="catalytic activity">
    <reaction evidence="1">
        <text>1-(2-carboxyphenylamino)-1-deoxy-D-ribulose 5-phosphate + H(+) = (1S,2R)-1-C-(indol-3-yl)glycerol 3-phosphate + CO2 + H2O</text>
        <dbReference type="Rhea" id="RHEA:23476"/>
        <dbReference type="ChEBI" id="CHEBI:15377"/>
        <dbReference type="ChEBI" id="CHEBI:15378"/>
        <dbReference type="ChEBI" id="CHEBI:16526"/>
        <dbReference type="ChEBI" id="CHEBI:58613"/>
        <dbReference type="ChEBI" id="CHEBI:58866"/>
        <dbReference type="EC" id="4.1.1.48"/>
    </reaction>
</comment>
<comment type="pathway">
    <text evidence="1">Amino-acid biosynthesis; L-tryptophan biosynthesis; L-tryptophan from chorismate: step 4/5.</text>
</comment>
<comment type="similarity">
    <text evidence="1">Belongs to the TrpC family.</text>
</comment>
<organism>
    <name type="scientific">Burkholderia lata (strain ATCC 17760 / DSM 23089 / LMG 22485 / NCIMB 9086 / R18194 / 383)</name>
    <dbReference type="NCBI Taxonomy" id="482957"/>
    <lineage>
        <taxon>Bacteria</taxon>
        <taxon>Pseudomonadati</taxon>
        <taxon>Pseudomonadota</taxon>
        <taxon>Betaproteobacteria</taxon>
        <taxon>Burkholderiales</taxon>
        <taxon>Burkholderiaceae</taxon>
        <taxon>Burkholderia</taxon>
        <taxon>Burkholderia cepacia complex</taxon>
    </lineage>
</organism>
<name>TRPC_BURL3</name>
<accession>Q39JZ7</accession>